<evidence type="ECO:0000250" key="1"/>
<evidence type="ECO:0000255" key="2"/>
<evidence type="ECO:0000255" key="3">
    <source>
        <dbReference type="PROSITE-ProRule" id="PRU10095"/>
    </source>
</evidence>
<evidence type="ECO:0000256" key="4">
    <source>
        <dbReference type="SAM" id="MobiDB-lite"/>
    </source>
</evidence>
<evidence type="ECO:0000305" key="5"/>
<protein>
    <recommendedName>
        <fullName>Extracellular metalloproteinase 4</fullName>
        <ecNumber>3.4.24.-</ecNumber>
    </recommendedName>
    <alternativeName>
        <fullName>Elastinolytic metalloproteinase MEP4</fullName>
    </alternativeName>
    <alternativeName>
        <fullName>Fungalysin MEP4</fullName>
    </alternativeName>
</protein>
<organism>
    <name type="scientific">Arthroderma gypseum (strain ATCC MYA-4604 / CBS 118893)</name>
    <name type="common">Microsporum gypseum</name>
    <dbReference type="NCBI Taxonomy" id="535722"/>
    <lineage>
        <taxon>Eukaryota</taxon>
        <taxon>Fungi</taxon>
        <taxon>Dikarya</taxon>
        <taxon>Ascomycota</taxon>
        <taxon>Pezizomycotina</taxon>
        <taxon>Eurotiomycetes</taxon>
        <taxon>Eurotiomycetidae</taxon>
        <taxon>Onygenales</taxon>
        <taxon>Arthrodermataceae</taxon>
        <taxon>Nannizzia</taxon>
    </lineage>
</organism>
<accession>E4UUL6</accession>
<name>MEP4_ARTGP</name>
<feature type="signal peptide" evidence="2">
    <location>
        <begin position="1"/>
        <end position="18"/>
    </location>
</feature>
<feature type="propeptide" id="PRO_0000407166" evidence="1">
    <location>
        <begin position="19"/>
        <end position="253"/>
    </location>
</feature>
<feature type="chain" id="PRO_0000407167" description="Extracellular metalloproteinase 4">
    <location>
        <begin position="254"/>
        <end position="642"/>
    </location>
</feature>
<feature type="region of interest" description="Disordered" evidence="4">
    <location>
        <begin position="49"/>
        <end position="72"/>
    </location>
</feature>
<feature type="compositionally biased region" description="Polar residues" evidence="4">
    <location>
        <begin position="49"/>
        <end position="60"/>
    </location>
</feature>
<feature type="compositionally biased region" description="Low complexity" evidence="4">
    <location>
        <begin position="61"/>
        <end position="71"/>
    </location>
</feature>
<feature type="active site" evidence="3">
    <location>
        <position position="437"/>
    </location>
</feature>
<feature type="binding site" evidence="3">
    <location>
        <position position="436"/>
    </location>
    <ligand>
        <name>Zn(2+)</name>
        <dbReference type="ChEBI" id="CHEBI:29105"/>
        <note>catalytic</note>
    </ligand>
</feature>
<feature type="binding site" evidence="3">
    <location>
        <position position="440"/>
    </location>
    <ligand>
        <name>Zn(2+)</name>
        <dbReference type="ChEBI" id="CHEBI:29105"/>
        <note>catalytic</note>
    </ligand>
</feature>
<feature type="glycosylation site" description="N-linked (GlcNAc...) asparagine" evidence="2">
    <location>
        <position position="419"/>
    </location>
</feature>
<feature type="glycosylation site" description="N-linked (GlcNAc...) asparagine" evidence="2">
    <location>
        <position position="509"/>
    </location>
</feature>
<feature type="glycosylation site" description="N-linked (GlcNAc...) asparagine" evidence="2">
    <location>
        <position position="602"/>
    </location>
</feature>
<gene>
    <name type="primary">MEP4</name>
    <name type="ORF">MGYG_03984</name>
</gene>
<comment type="function">
    <text evidence="1">Secreted metalloproteinase that allows assimilation of proteinaceous substrates and probably acts as a virulence factor.</text>
</comment>
<comment type="cofactor">
    <cofactor evidence="1">
        <name>Zn(2+)</name>
        <dbReference type="ChEBI" id="CHEBI:29105"/>
    </cofactor>
    <text evidence="1">Binds 1 zinc ion per subunit.</text>
</comment>
<comment type="subcellular location">
    <subcellularLocation>
        <location evidence="1">Secreted</location>
    </subcellularLocation>
</comment>
<comment type="similarity">
    <text evidence="5">Belongs to the peptidase M36 family.</text>
</comment>
<keyword id="KW-0325">Glycoprotein</keyword>
<keyword id="KW-0378">Hydrolase</keyword>
<keyword id="KW-0479">Metal-binding</keyword>
<keyword id="KW-0482">Metalloprotease</keyword>
<keyword id="KW-0645">Protease</keyword>
<keyword id="KW-1185">Reference proteome</keyword>
<keyword id="KW-0964">Secreted</keyword>
<keyword id="KW-0732">Signal</keyword>
<keyword id="KW-0862">Zinc</keyword>
<keyword id="KW-0865">Zymogen</keyword>
<reference key="1">
    <citation type="journal article" date="2012" name="MBio">
        <title>Comparative genome analysis of Trichophyton rubrum and related dermatophytes reveals candidate genes involved in infection.</title>
        <authorList>
            <person name="Martinez D.A."/>
            <person name="Oliver B.G."/>
            <person name="Graeser Y."/>
            <person name="Goldberg J.M."/>
            <person name="Li W."/>
            <person name="Martinez-Rossi N.M."/>
            <person name="Monod M."/>
            <person name="Shelest E."/>
            <person name="Barton R.C."/>
            <person name="Birch E."/>
            <person name="Brakhage A.A."/>
            <person name="Chen Z."/>
            <person name="Gurr S.J."/>
            <person name="Heiman D."/>
            <person name="Heitman J."/>
            <person name="Kosti I."/>
            <person name="Rossi A."/>
            <person name="Saif S."/>
            <person name="Samalova M."/>
            <person name="Saunders C.W."/>
            <person name="Shea T."/>
            <person name="Summerbell R.C."/>
            <person name="Xu J."/>
            <person name="Young S."/>
            <person name="Zeng Q."/>
            <person name="Birren B.W."/>
            <person name="Cuomo C.A."/>
            <person name="White T.C."/>
        </authorList>
    </citation>
    <scope>NUCLEOTIDE SEQUENCE [LARGE SCALE GENOMIC DNA]</scope>
    <source>
        <strain>ATCC MYA-4604 / CBS 118893</strain>
    </source>
</reference>
<proteinExistence type="inferred from homology"/>
<sequence length="642" mass="70359">MHGLLLAGLLALPLNVLAHPTESHSSGISRRAIDITSYRLPQISKYTKSDSLTGQDGQSFTASSADADTSSGDYVSTATNWLKKTLPNASYRLVNDHYIGDSGIGHVHFRQTAHGIDIDNTDFNVNIGRDGKVFSFGNSFYDGEIPKANPMVKRDFSDPVDALHGAIQTLNIPVTAKPENVKAKPVEGKESFKFEGTSGALSDPKAQLVYLQKDGGLVLSWKVETDVGDNWLLSYVDANDKGKVHSVVDYVSAAAYEVYPWGINDPTEGKRSTIHVPWFKTQSVDWHIDGKNWYPTTRGNNAIAQENPTGQREYENNYRPKSPLFIFKYPYSEAMSPPSSYRDASITQLFYTTNVFHDVLYILGFNEKAGNFQTNNWNKGGLGGDYAILNSQDGSGVNNANFATPPDGEPGRMRMYNWNASTPERDGCFEAGIVIHEYTHGVSNRLTGGPANSRCLAALESGGMGEGWSDFFATAIRLKNGDTRATDYTMGEWASNRPNGIRKYRYSTNLTTNPHMYVDADGLTSVHAIGTIWASMLYEMLWNLIDKHGKGDVSKVKPTLKNGVPTDGRHLAMKIVLDGMALQPCLPNFVQARDAIIDADKNLTGGSNKCEIWKAFAKRGLGVGAVYNPSKRTGSNELPAGC</sequence>
<dbReference type="EC" id="3.4.24.-"/>
<dbReference type="EMBL" id="DS989824">
    <property type="protein sequence ID" value="EFR00983.1"/>
    <property type="molecule type" value="Genomic_DNA"/>
</dbReference>
<dbReference type="RefSeq" id="XP_003173813.1">
    <property type="nucleotide sequence ID" value="XM_003173765.1"/>
</dbReference>
<dbReference type="SMR" id="E4UUL6"/>
<dbReference type="MEROPS" id="M36.001"/>
<dbReference type="GlyCosmos" id="E4UUL6">
    <property type="glycosylation" value="3 sites, No reported glycans"/>
</dbReference>
<dbReference type="GeneID" id="10029097"/>
<dbReference type="VEuPathDB" id="FungiDB:MGYG_03984"/>
<dbReference type="eggNOG" id="ENOG502QTDC">
    <property type="taxonomic scope" value="Eukaryota"/>
</dbReference>
<dbReference type="HOGENOM" id="CLU_012703_3_0_1"/>
<dbReference type="InParanoid" id="E4UUL6"/>
<dbReference type="OMA" id="SKFATHR"/>
<dbReference type="OrthoDB" id="3227768at2759"/>
<dbReference type="Proteomes" id="UP000002669">
    <property type="component" value="Unassembled WGS sequence"/>
</dbReference>
<dbReference type="GO" id="GO:0005576">
    <property type="term" value="C:extracellular region"/>
    <property type="evidence" value="ECO:0007669"/>
    <property type="project" value="UniProtKB-SubCell"/>
</dbReference>
<dbReference type="GO" id="GO:0004222">
    <property type="term" value="F:metalloendopeptidase activity"/>
    <property type="evidence" value="ECO:0007669"/>
    <property type="project" value="InterPro"/>
</dbReference>
<dbReference type="GO" id="GO:0008270">
    <property type="term" value="F:zinc ion binding"/>
    <property type="evidence" value="ECO:0007669"/>
    <property type="project" value="InterPro"/>
</dbReference>
<dbReference type="GO" id="GO:0006508">
    <property type="term" value="P:proteolysis"/>
    <property type="evidence" value="ECO:0007669"/>
    <property type="project" value="UniProtKB-KW"/>
</dbReference>
<dbReference type="CDD" id="cd09596">
    <property type="entry name" value="M36"/>
    <property type="match status" value="1"/>
</dbReference>
<dbReference type="Gene3D" id="3.10.170.10">
    <property type="match status" value="1"/>
</dbReference>
<dbReference type="Gene3D" id="1.10.390.10">
    <property type="entry name" value="Neutral Protease Domain 2"/>
    <property type="match status" value="1"/>
</dbReference>
<dbReference type="InterPro" id="IPR011096">
    <property type="entry name" value="FTP_domain"/>
</dbReference>
<dbReference type="InterPro" id="IPR050371">
    <property type="entry name" value="Fungal_virulence_M36"/>
</dbReference>
<dbReference type="InterPro" id="IPR001842">
    <property type="entry name" value="Peptidase_M36"/>
</dbReference>
<dbReference type="InterPro" id="IPR027268">
    <property type="entry name" value="Peptidase_M4/M1_CTD_sf"/>
</dbReference>
<dbReference type="PANTHER" id="PTHR33478">
    <property type="entry name" value="EXTRACELLULAR METALLOPROTEINASE MEP"/>
    <property type="match status" value="1"/>
</dbReference>
<dbReference type="PANTHER" id="PTHR33478:SF1">
    <property type="entry name" value="EXTRACELLULAR METALLOPROTEINASE MEP"/>
    <property type="match status" value="1"/>
</dbReference>
<dbReference type="Pfam" id="PF07504">
    <property type="entry name" value="FTP"/>
    <property type="match status" value="1"/>
</dbReference>
<dbReference type="Pfam" id="PF02128">
    <property type="entry name" value="Peptidase_M36"/>
    <property type="match status" value="1"/>
</dbReference>
<dbReference type="PRINTS" id="PR00999">
    <property type="entry name" value="FUNGALYSIN"/>
</dbReference>
<dbReference type="SUPFAM" id="SSF55486">
    <property type="entry name" value="Metalloproteases ('zincins'), catalytic domain"/>
    <property type="match status" value="1"/>
</dbReference>
<dbReference type="PROSITE" id="PS00142">
    <property type="entry name" value="ZINC_PROTEASE"/>
    <property type="match status" value="1"/>
</dbReference>